<reference key="1">
    <citation type="journal article" date="2000" name="Proc. Natl. Acad. Sci. U.S.A.">
        <title>Gene expression profiling in the human hypothalamus-pituitary-adrenal axis and full-length cDNA cloning.</title>
        <authorList>
            <person name="Hu R.-M."/>
            <person name="Han Z.-G."/>
            <person name="Song H.-D."/>
            <person name="Peng Y.-D."/>
            <person name="Huang Q.-H."/>
            <person name="Ren S.-X."/>
            <person name="Gu Y.-J."/>
            <person name="Huang C.-H."/>
            <person name="Li Y.-B."/>
            <person name="Jiang C.-L."/>
            <person name="Fu G."/>
            <person name="Zhang Q.-H."/>
            <person name="Gu B.-W."/>
            <person name="Dai M."/>
            <person name="Mao Y.-F."/>
            <person name="Gao G.-F."/>
            <person name="Rong R."/>
            <person name="Ye M."/>
            <person name="Zhou J."/>
            <person name="Xu S.-H."/>
            <person name="Gu J."/>
            <person name="Shi J.-X."/>
            <person name="Jin W.-R."/>
            <person name="Zhang C.-K."/>
            <person name="Wu T.-M."/>
            <person name="Huang G.-Y."/>
            <person name="Chen Z."/>
            <person name="Chen M.-D."/>
            <person name="Chen J.-L."/>
        </authorList>
    </citation>
    <scope>NUCLEOTIDE SEQUENCE [LARGE SCALE MRNA] (ISOFORM 1)</scope>
    <source>
        <tissue>Adrenal gland</tissue>
    </source>
</reference>
<reference key="2">
    <citation type="journal article" date="2000" name="Genome Res.">
        <title>Cloning and functional analysis of cDNAs with open reading frames for 300 previously undefined genes expressed in CD34+ hematopoietic stem/progenitor cells.</title>
        <authorList>
            <person name="Zhang Q.-H."/>
            <person name="Ye M."/>
            <person name="Wu X.-Y."/>
            <person name="Ren S.-X."/>
            <person name="Zhao M."/>
            <person name="Zhao C.-J."/>
            <person name="Fu G."/>
            <person name="Shen Y."/>
            <person name="Fan H.-Y."/>
            <person name="Lu G."/>
            <person name="Zhong M."/>
            <person name="Xu X.-R."/>
            <person name="Han Z.-G."/>
            <person name="Zhang J.-W."/>
            <person name="Tao J."/>
            <person name="Huang Q.-H."/>
            <person name="Zhou J."/>
            <person name="Hu G.-X."/>
            <person name="Gu J."/>
            <person name="Chen S.-J."/>
            <person name="Chen Z."/>
        </authorList>
    </citation>
    <scope>NUCLEOTIDE SEQUENCE [LARGE SCALE MRNA] (ISOFORM 1)</scope>
    <source>
        <tissue>Umbilical cord blood</tissue>
    </source>
</reference>
<reference key="3">
    <citation type="journal article" date="2004" name="Nat. Genet.">
        <title>Complete sequencing and characterization of 21,243 full-length human cDNAs.</title>
        <authorList>
            <person name="Ota T."/>
            <person name="Suzuki Y."/>
            <person name="Nishikawa T."/>
            <person name="Otsuki T."/>
            <person name="Sugiyama T."/>
            <person name="Irie R."/>
            <person name="Wakamatsu A."/>
            <person name="Hayashi K."/>
            <person name="Sato H."/>
            <person name="Nagai K."/>
            <person name="Kimura K."/>
            <person name="Makita H."/>
            <person name="Sekine M."/>
            <person name="Obayashi M."/>
            <person name="Nishi T."/>
            <person name="Shibahara T."/>
            <person name="Tanaka T."/>
            <person name="Ishii S."/>
            <person name="Yamamoto J."/>
            <person name="Saito K."/>
            <person name="Kawai Y."/>
            <person name="Isono Y."/>
            <person name="Nakamura Y."/>
            <person name="Nagahari K."/>
            <person name="Murakami K."/>
            <person name="Yasuda T."/>
            <person name="Iwayanagi T."/>
            <person name="Wagatsuma M."/>
            <person name="Shiratori A."/>
            <person name="Sudo H."/>
            <person name="Hosoiri T."/>
            <person name="Kaku Y."/>
            <person name="Kodaira H."/>
            <person name="Kondo H."/>
            <person name="Sugawara M."/>
            <person name="Takahashi M."/>
            <person name="Kanda K."/>
            <person name="Yokoi T."/>
            <person name="Furuya T."/>
            <person name="Kikkawa E."/>
            <person name="Omura Y."/>
            <person name="Abe K."/>
            <person name="Kamihara K."/>
            <person name="Katsuta N."/>
            <person name="Sato K."/>
            <person name="Tanikawa M."/>
            <person name="Yamazaki M."/>
            <person name="Ninomiya K."/>
            <person name="Ishibashi T."/>
            <person name="Yamashita H."/>
            <person name="Murakawa K."/>
            <person name="Fujimori K."/>
            <person name="Tanai H."/>
            <person name="Kimata M."/>
            <person name="Watanabe M."/>
            <person name="Hiraoka S."/>
            <person name="Chiba Y."/>
            <person name="Ishida S."/>
            <person name="Ono Y."/>
            <person name="Takiguchi S."/>
            <person name="Watanabe S."/>
            <person name="Yosida M."/>
            <person name="Hotuta T."/>
            <person name="Kusano J."/>
            <person name="Kanehori K."/>
            <person name="Takahashi-Fujii A."/>
            <person name="Hara H."/>
            <person name="Tanase T.-O."/>
            <person name="Nomura Y."/>
            <person name="Togiya S."/>
            <person name="Komai F."/>
            <person name="Hara R."/>
            <person name="Takeuchi K."/>
            <person name="Arita M."/>
            <person name="Imose N."/>
            <person name="Musashino K."/>
            <person name="Yuuki H."/>
            <person name="Oshima A."/>
            <person name="Sasaki N."/>
            <person name="Aotsuka S."/>
            <person name="Yoshikawa Y."/>
            <person name="Matsunawa H."/>
            <person name="Ichihara T."/>
            <person name="Shiohata N."/>
            <person name="Sano S."/>
            <person name="Moriya S."/>
            <person name="Momiyama H."/>
            <person name="Satoh N."/>
            <person name="Takami S."/>
            <person name="Terashima Y."/>
            <person name="Suzuki O."/>
            <person name="Nakagawa S."/>
            <person name="Senoh A."/>
            <person name="Mizoguchi H."/>
            <person name="Goto Y."/>
            <person name="Shimizu F."/>
            <person name="Wakebe H."/>
            <person name="Hishigaki H."/>
            <person name="Watanabe T."/>
            <person name="Sugiyama A."/>
            <person name="Takemoto M."/>
            <person name="Kawakami B."/>
            <person name="Yamazaki M."/>
            <person name="Watanabe K."/>
            <person name="Kumagai A."/>
            <person name="Itakura S."/>
            <person name="Fukuzumi Y."/>
            <person name="Fujimori Y."/>
            <person name="Komiyama M."/>
            <person name="Tashiro H."/>
            <person name="Tanigami A."/>
            <person name="Fujiwara T."/>
            <person name="Ono T."/>
            <person name="Yamada K."/>
            <person name="Fujii Y."/>
            <person name="Ozaki K."/>
            <person name="Hirao M."/>
            <person name="Ohmori Y."/>
            <person name="Kawabata A."/>
            <person name="Hikiji T."/>
            <person name="Kobatake N."/>
            <person name="Inagaki H."/>
            <person name="Ikema Y."/>
            <person name="Okamoto S."/>
            <person name="Okitani R."/>
            <person name="Kawakami T."/>
            <person name="Noguchi S."/>
            <person name="Itoh T."/>
            <person name="Shigeta K."/>
            <person name="Senba T."/>
            <person name="Matsumura K."/>
            <person name="Nakajima Y."/>
            <person name="Mizuno T."/>
            <person name="Morinaga M."/>
            <person name="Sasaki M."/>
            <person name="Togashi T."/>
            <person name="Oyama M."/>
            <person name="Hata H."/>
            <person name="Watanabe M."/>
            <person name="Komatsu T."/>
            <person name="Mizushima-Sugano J."/>
            <person name="Satoh T."/>
            <person name="Shirai Y."/>
            <person name="Takahashi Y."/>
            <person name="Nakagawa K."/>
            <person name="Okumura K."/>
            <person name="Nagase T."/>
            <person name="Nomura N."/>
            <person name="Kikuchi H."/>
            <person name="Masuho Y."/>
            <person name="Yamashita R."/>
            <person name="Nakai K."/>
            <person name="Yada T."/>
            <person name="Nakamura Y."/>
            <person name="Ohara O."/>
            <person name="Isogai T."/>
            <person name="Sugano S."/>
        </authorList>
    </citation>
    <scope>NUCLEOTIDE SEQUENCE [LARGE SCALE MRNA] (ISOFORM 1)</scope>
    <source>
        <tissue>Brain</tissue>
    </source>
</reference>
<reference key="4">
    <citation type="journal article" date="2006" name="Nature">
        <title>Human chromosome 11 DNA sequence and analysis including novel gene identification.</title>
        <authorList>
            <person name="Taylor T.D."/>
            <person name="Noguchi H."/>
            <person name="Totoki Y."/>
            <person name="Toyoda A."/>
            <person name="Kuroki Y."/>
            <person name="Dewar K."/>
            <person name="Lloyd C."/>
            <person name="Itoh T."/>
            <person name="Takeda T."/>
            <person name="Kim D.-W."/>
            <person name="She X."/>
            <person name="Barlow K.F."/>
            <person name="Bloom T."/>
            <person name="Bruford E."/>
            <person name="Chang J.L."/>
            <person name="Cuomo C.A."/>
            <person name="Eichler E."/>
            <person name="FitzGerald M.G."/>
            <person name="Jaffe D.B."/>
            <person name="LaButti K."/>
            <person name="Nicol R."/>
            <person name="Park H.-S."/>
            <person name="Seaman C."/>
            <person name="Sougnez C."/>
            <person name="Yang X."/>
            <person name="Zimmer A.R."/>
            <person name="Zody M.C."/>
            <person name="Birren B.W."/>
            <person name="Nusbaum C."/>
            <person name="Fujiyama A."/>
            <person name="Hattori M."/>
            <person name="Rogers J."/>
            <person name="Lander E.S."/>
            <person name="Sakaki Y."/>
        </authorList>
    </citation>
    <scope>NUCLEOTIDE SEQUENCE [LARGE SCALE GENOMIC DNA]</scope>
</reference>
<reference key="5">
    <citation type="submission" date="2005-07" db="EMBL/GenBank/DDBJ databases">
        <authorList>
            <person name="Mural R.J."/>
            <person name="Istrail S."/>
            <person name="Sutton G.G."/>
            <person name="Florea L."/>
            <person name="Halpern A.L."/>
            <person name="Mobarry C.M."/>
            <person name="Lippert R."/>
            <person name="Walenz B."/>
            <person name="Shatkay H."/>
            <person name="Dew I."/>
            <person name="Miller J.R."/>
            <person name="Flanigan M.J."/>
            <person name="Edwards N.J."/>
            <person name="Bolanos R."/>
            <person name="Fasulo D."/>
            <person name="Halldorsson B.V."/>
            <person name="Hannenhalli S."/>
            <person name="Turner R."/>
            <person name="Yooseph S."/>
            <person name="Lu F."/>
            <person name="Nusskern D.R."/>
            <person name="Shue B.C."/>
            <person name="Zheng X.H."/>
            <person name="Zhong F."/>
            <person name="Delcher A.L."/>
            <person name="Huson D.H."/>
            <person name="Kravitz S.A."/>
            <person name="Mouchard L."/>
            <person name="Reinert K."/>
            <person name="Remington K.A."/>
            <person name="Clark A.G."/>
            <person name="Waterman M.S."/>
            <person name="Eichler E.E."/>
            <person name="Adams M.D."/>
            <person name="Hunkapiller M.W."/>
            <person name="Myers E.W."/>
            <person name="Venter J.C."/>
        </authorList>
    </citation>
    <scope>NUCLEOTIDE SEQUENCE [LARGE SCALE GENOMIC DNA]</scope>
</reference>
<reference key="6">
    <citation type="journal article" date="2004" name="Genome Res.">
        <title>The status, quality, and expansion of the NIH full-length cDNA project: the Mammalian Gene Collection (MGC).</title>
        <authorList>
            <consortium name="The MGC Project Team"/>
        </authorList>
    </citation>
    <scope>NUCLEOTIDE SEQUENCE [LARGE SCALE MRNA] (ISOFORM 1)</scope>
    <source>
        <tissue>Brain</tissue>
        <tissue>Prostate</tissue>
    </source>
</reference>
<reference key="7">
    <citation type="journal article" date="2008" name="FEBS Lett.">
        <title>HemK2 protein, encoded on human chromosome 21, methylates translation termination factor eRF1.</title>
        <authorList>
            <person name="Figaro S."/>
            <person name="Scrima N."/>
            <person name="Buckingham R.H."/>
            <person name="Heurgue-Hamard V."/>
        </authorList>
    </citation>
    <scope>FUNCTION</scope>
    <scope>INTERACTION WITH N6AMT1</scope>
</reference>
<reference key="8">
    <citation type="journal article" date="2008" name="Proc. Natl. Acad. Sci. U.S.A.">
        <title>A quantitative atlas of mitotic phosphorylation.</title>
        <authorList>
            <person name="Dephoure N."/>
            <person name="Zhou C."/>
            <person name="Villen J."/>
            <person name="Beausoleil S.A."/>
            <person name="Bakalarski C.E."/>
            <person name="Elledge S.J."/>
            <person name="Gygi S.P."/>
        </authorList>
    </citation>
    <scope>PHOSPHORYLATION [LARGE SCALE ANALYSIS] AT SER-119</scope>
    <scope>IDENTIFICATION BY MASS SPECTROMETRY [LARGE SCALE ANALYSIS]</scope>
    <source>
        <tissue>Cervix carcinoma</tissue>
    </source>
</reference>
<reference key="9">
    <citation type="journal article" date="2009" name="Sci. Signal.">
        <title>Quantitative phosphoproteomic analysis of T cell receptor signaling reveals system-wide modulation of protein-protein interactions.</title>
        <authorList>
            <person name="Mayya V."/>
            <person name="Lundgren D.H."/>
            <person name="Hwang S.-I."/>
            <person name="Rezaul K."/>
            <person name="Wu L."/>
            <person name="Eng J.K."/>
            <person name="Rodionov V."/>
            <person name="Han D.K."/>
        </authorList>
    </citation>
    <scope>PHOSPHORYLATION [LARGE SCALE ANALYSIS] AT SER-119</scope>
    <scope>IDENTIFICATION BY MASS SPECTROMETRY [LARGE SCALE ANALYSIS]</scope>
    <source>
        <tissue>Leukemic T-cell</tissue>
    </source>
</reference>
<reference key="10">
    <citation type="journal article" date="2010" name="Mol. Cell. Biol.">
        <title>Human AlkB homolog ABH8 is a tRNA methyltransferase required for wobble uridine modification and DNA damage survival.</title>
        <authorList>
            <person name="Fu D."/>
            <person name="Brophy J.A."/>
            <person name="Chan C.T."/>
            <person name="Atmore K.A."/>
            <person name="Begley U."/>
            <person name="Paules R.S."/>
            <person name="Dedon P.C."/>
            <person name="Begley T.J."/>
            <person name="Samson L.D."/>
        </authorList>
    </citation>
    <scope>INTERACTION WITH ALKBH8</scope>
</reference>
<reference key="11">
    <citation type="journal article" date="2010" name="Sci. Signal.">
        <title>Quantitative phosphoproteomics reveals widespread full phosphorylation site occupancy during mitosis.</title>
        <authorList>
            <person name="Olsen J.V."/>
            <person name="Vermeulen M."/>
            <person name="Santamaria A."/>
            <person name="Kumar C."/>
            <person name="Miller M.L."/>
            <person name="Jensen L.J."/>
            <person name="Gnad F."/>
            <person name="Cox J."/>
            <person name="Jensen T.S."/>
            <person name="Nigg E.A."/>
            <person name="Brunak S."/>
            <person name="Mann M."/>
        </authorList>
    </citation>
    <scope>PHOSPHORYLATION [LARGE SCALE ANALYSIS] AT SER-119 AND SER-125</scope>
    <scope>IDENTIFICATION BY MASS SPECTROMETRY [LARGE SCALE ANALYSIS]</scope>
    <source>
        <tissue>Cervix carcinoma</tissue>
    </source>
</reference>
<reference key="12">
    <citation type="journal article" date="2011" name="BMC Syst. Biol.">
        <title>Initial characterization of the human central proteome.</title>
        <authorList>
            <person name="Burkard T.R."/>
            <person name="Planyavsky M."/>
            <person name="Kaupe I."/>
            <person name="Breitwieser F.P."/>
            <person name="Buerckstuemmer T."/>
            <person name="Bennett K.L."/>
            <person name="Superti-Furga G."/>
            <person name="Colinge J."/>
        </authorList>
    </citation>
    <scope>IDENTIFICATION BY MASS SPECTROMETRY [LARGE SCALE ANALYSIS]</scope>
</reference>
<reference key="13">
    <citation type="journal article" date="2015" name="Mol. Biol. Cell">
        <title>The human 18S rRNA base methyltransferases DIMT1L and WBSCR22-TRMT112 but not rRNA modification are required for ribosome biogenesis.</title>
        <authorList>
            <person name="Zorbas C."/>
            <person name="Nicolas E."/>
            <person name="Wacheul L."/>
            <person name="Huvelle E."/>
            <person name="Heurgue-Hamard V."/>
            <person name="Lafontaine D.L."/>
        </authorList>
    </citation>
    <scope>FUNCTION</scope>
    <scope>SUBUNIT</scope>
    <scope>SUBCELLULAR LOCATION</scope>
</reference>
<reference key="14">
    <citation type="journal article" date="2019" name="Cell Discov.">
        <title>Human HemK2/KMT9/N6AMT1 is an active protein methyltransferase, but does not act on DNA in vitro, in the presence of Trm112.</title>
        <authorList>
            <person name="Woodcock C.B."/>
            <person name="Yu D."/>
            <person name="Zhang X."/>
            <person name="Cheng X."/>
        </authorList>
    </citation>
    <scope>INTERACTION WITH N6AMT1</scope>
</reference>
<reference key="15">
    <citation type="journal article" date="2020" name="Genes Dev.">
        <title>The rRNA m6A methyltransferase METTL5 is involved in pluripotency and developmental programs.</title>
        <authorList>
            <person name="Ignatova V.V."/>
            <person name="Stolz P."/>
            <person name="Kaiser S."/>
            <person name="Gustafsson T.H."/>
            <person name="Lastres P.R."/>
            <person name="Sanz-Moreno A."/>
            <person name="Cho Y.L."/>
            <person name="Amarie O.V."/>
            <person name="Aguilar-Pimentel A."/>
            <person name="Klein-Rodewald T."/>
            <person name="Calzada-Wack J."/>
            <person name="Becker L."/>
            <person name="Marschall S."/>
            <person name="Kraiger M."/>
            <person name="Garrett L."/>
            <person name="Seisenberger C."/>
            <person name="Hoelter S.M."/>
            <person name="Borland K."/>
            <person name="Van De Logt E."/>
            <person name="Jansen P.W.T.C."/>
            <person name="Baltissen M.P."/>
            <person name="Valenta M."/>
            <person name="Vermeulen M."/>
            <person name="Wurst W."/>
            <person name="Gailus-Durner V."/>
            <person name="Fuchs H."/>
            <person name="de Angelis M.H."/>
            <person name="Rando O.J."/>
            <person name="Kellner S.M."/>
            <person name="Bultmann S."/>
            <person name="Schneider R."/>
        </authorList>
    </citation>
    <scope>INTERACTION WITH METTL5</scope>
</reference>
<reference key="16">
    <citation type="journal article" date="2021" name="Int. J. Mol. Sci.">
        <title>Human TRMT112-Methyltransferase Network Consists of Seven Partners Interacting with a Common Co-Factor.</title>
        <authorList>
            <person name="Brumele B."/>
            <person name="Mutso M."/>
            <person name="Telanne L."/>
            <person name="Ounap K."/>
            <person name="Spunde K."/>
            <person name="Abroi A."/>
            <person name="Kurg R."/>
        </authorList>
    </citation>
    <scope>INTERACTION WITH THUMPD3; THUMPD2; BUD23; METTL5; N6AMT1; ALKBH8 AND TRMT11</scope>
    <scope>MUTAGENESIS OF THR-5; LEU-8; SER-10; MET-45; LYS-48; GLU-50; GLU-92; PHE-107 AND ILE-113</scope>
</reference>
<reference key="17">
    <citation type="journal article" date="2021" name="J. Biol. Chem.">
        <title>Enzymatic characterization of three human RNA adenosine methyltransferases reveals diverse substrate affinities and reaction optima.</title>
        <authorList>
            <person name="Yu D."/>
            <person name="Kaur G."/>
            <person name="Blumenthal R.M."/>
            <person name="Zhang X."/>
            <person name="Cheng X."/>
        </authorList>
    </citation>
    <scope>FUNCTION</scope>
    <scope>INTERACTION WITH METTL5</scope>
</reference>
<reference key="18">
    <citation type="journal article" date="2021" name="Nucleic Acids Res.">
        <title>THUMPD3-TRMT112 is a m2G methyltransferase working on a broad range of tRNA substrates.</title>
        <authorList>
            <person name="Yang W.Q."/>
            <person name="Xiong Q.P."/>
            <person name="Ge J.Y."/>
            <person name="Li H."/>
            <person name="Zhu W.Y."/>
            <person name="Nie Y."/>
            <person name="Lin X."/>
            <person name="Lv D."/>
            <person name="Li J."/>
            <person name="Lin H."/>
            <person name="Liu R.J."/>
        </authorList>
    </citation>
    <scope>FUNCTION</scope>
    <scope>INTERACTION WITH THUMPD3</scope>
</reference>
<reference key="19">
    <citation type="journal article" date="2022" name="J. Biol. Chem.">
        <title>The METTL5-TRMT112 N6-methyladenosine methyltransferase complex regulates mRNA translation via 18S rRNA methylation.</title>
        <authorList>
            <person name="Sepich-Poore C."/>
            <person name="Zheng Z."/>
            <person name="Schmitt E."/>
            <person name="Wen K."/>
            <person name="Zhang Z.S."/>
            <person name="Cui X.L."/>
            <person name="Dai Q."/>
            <person name="Zhu A.C."/>
            <person name="Zhang L."/>
            <person name="Sanchez Castillo A."/>
            <person name="Tan H."/>
            <person name="Peng J."/>
            <person name="Zhuang X."/>
            <person name="He C."/>
            <person name="Nachtergaele S."/>
        </authorList>
    </citation>
    <scope>FUNCTION</scope>
    <scope>INTERACTION WITH METTL5</scope>
</reference>
<reference key="20">
    <citation type="journal article" date="2023" name="Nucleic Acids Res.">
        <title>N 2-methylguanosine modifications on human tRNAs and snRNA U6 are important for cell proliferation, protein translation and pre-mRNA splicing.</title>
        <authorList>
            <person name="Wang C."/>
            <person name="Ulryck N."/>
            <person name="Herzel L."/>
            <person name="Pythoud N."/>
            <person name="Kleiber N."/>
            <person name="Guerineau V."/>
            <person name="Jactel V."/>
            <person name="Moritz C."/>
            <person name="Bohnsack M.T."/>
            <person name="Carapito C."/>
            <person name="Touboul D."/>
            <person name="Bohnsack K.E."/>
            <person name="Graille M."/>
        </authorList>
    </citation>
    <scope>FUNCTION</scope>
    <scope>IDENTIFICATION IN METHYLTRANSFERASE COMPLEXES</scope>
    <scope>MUTAGENESIS OF THR-5</scope>
</reference>
<reference evidence="20 21" key="21">
    <citation type="journal article" date="2019" name="Nucleic Acids Res.">
        <title>The human 18S rRNA m6A methyltransferase METTL5 is stabilized by TRMT112.</title>
        <authorList>
            <person name="van Tran N."/>
            <person name="Ernst F.G.M."/>
            <person name="Hawley B.R."/>
            <person name="Zorbas C."/>
            <person name="Ulryck N."/>
            <person name="Hackert P."/>
            <person name="Bohnsack K.E."/>
            <person name="Bohnsack M.T."/>
            <person name="Jaffrey S.R."/>
            <person name="Graille M."/>
            <person name="Lafontaine D.L.J."/>
        </authorList>
    </citation>
    <scope>X-RAY CRYSTALLOGRAPHY (1.60 ANGSTROMS) OF 1-118 IN COMPLEX WITH METTL5</scope>
    <scope>FUNCTION</scope>
    <scope>INTERACTION WITH METTL5</scope>
</reference>
<reference evidence="24 25" key="22">
    <citation type="journal article" date="2019" name="Cell Discov.">
        <title>Structural insight into human N6amt1-Trm112 complex functioning as a protein methyltransferase.</title>
        <authorList>
            <person name="Li W."/>
            <person name="Shi Y."/>
            <person name="Zhang T."/>
            <person name="Ye J."/>
            <person name="Ding J."/>
        </authorList>
    </citation>
    <scope>X-RAY CRYSTALLOGRAPHY (2.00 ANGSTROMS)IN COMPLEX WITH N6AMT1</scope>
    <scope>INTERACTION WITH N6AMT1</scope>
    <scope>FUNCTION</scope>
    <scope>MUTAGENESIS OF LEU-8; LEU-9 AND ILE-113</scope>
</reference>
<reference evidence="18 19" key="23">
    <citation type="journal article" date="2019" name="Nat. Struct. Mol. Biol.">
        <title>KMT9 monomethylates histone H4 lysine 12 and controls proliferation of prostate cancer cells.</title>
        <authorList>
            <person name="Metzger E."/>
            <person name="Wang S."/>
            <person name="Urban S."/>
            <person name="Willmann D."/>
            <person name="Schmidt A."/>
            <person name="Offermann A."/>
            <person name="Allen A."/>
            <person name="Sum M."/>
            <person name="Obier N."/>
            <person name="Cottard F."/>
            <person name="Ulferts S."/>
            <person name="Preca B.T."/>
            <person name="Hermann B."/>
            <person name="Maurer J."/>
            <person name="Greschik H."/>
            <person name="Hornung V."/>
            <person name="Einsle O."/>
            <person name="Perner S."/>
            <person name="Imhof A."/>
            <person name="Jung M."/>
            <person name="Schule R."/>
        </authorList>
    </citation>
    <scope>X-RAY CRYSTALLOGRAPHY (1.90 ANGSTROMS) OF 2-125 IN COMPLEX WITH N6AMT1</scope>
    <scope>FUNCTION</scope>
    <scope>INTERACTION WITH N6AMT1</scope>
</reference>
<reference evidence="22 23" key="24">
    <citation type="journal article" date="2020" name="Biochem. J.">
        <title>Structural insight into HEMK2-TRMT112-mediated glutamine methylation.</title>
        <authorList>
            <person name="Gao J."/>
            <person name="Wang B."/>
            <person name="Yu H."/>
            <person name="Wu G."/>
            <person name="Wan C."/>
            <person name="Liu W."/>
            <person name="Liao S."/>
            <person name="Cheng L."/>
            <person name="Zhu Z."/>
        </authorList>
    </citation>
    <scope>X-RAY CRYSTALLOGRAPHY (2.20 ANGSTROMS) IN COMPLEX WITH N6AMT1</scope>
    <scope>INTERACTION WITH N6AMT1</scope>
</reference>
<feature type="chain" id="PRO_0000215797" description="Multifunctional methyltransferase subunit TRM112-like protein">
    <location>
        <begin position="1"/>
        <end position="125"/>
    </location>
</feature>
<feature type="domain" description="TRM112">
    <location>
        <begin position="2"/>
        <end position="119"/>
    </location>
</feature>
<feature type="modified residue" description="Phosphoserine" evidence="26 27 28">
    <location>
        <position position="119"/>
    </location>
</feature>
<feature type="modified residue" description="Phosphoserine" evidence="28">
    <location>
        <position position="125"/>
    </location>
</feature>
<feature type="splice variant" id="VSP_054748" description="In isoform 2." evidence="16">
    <location>
        <begin position="61"/>
        <end position="65"/>
    </location>
</feature>
<feature type="mutagenesis site" description="Abolishes interaction with N6AMT1, METTL5, TRMT11, THUMPD3 and THUMPD2. Reduces interaction with BUD23 and ALKBH8. Reduces expression of exogenous TRMT112." evidence="12">
    <original>T</original>
    <variation>A</variation>
    <location>
        <position position="5"/>
    </location>
</feature>
<feature type="mutagenesis site" description="Loss of interaction with METTL5, THUMPD3, THUMPD2 and TRMT11." evidence="14">
    <original>T</original>
    <variation>R</variation>
    <location>
        <position position="5"/>
    </location>
</feature>
<feature type="mutagenesis site" description="Strongly reduced ability to promote N5-methylation of ETF1 together with HEMK2/N6AMT1." evidence="7">
    <original>L</original>
    <variation>D</variation>
    <location>
        <position position="8"/>
    </location>
</feature>
<feature type="mutagenesis site" description="Abolishes interaction with METTL5 and THUMPD3. Reduces interaction with ALKBH8, THUMPD2 and TRMT11. No effect on interaction with N6AMT1 and BUD23. No effect on expression of exogenous TRMT112." evidence="12">
    <original>L</original>
    <variation>W</variation>
    <location>
        <position position="8"/>
    </location>
</feature>
<feature type="mutagenesis site" description="Strongly reduced ability to promote N5-methylation of ETF1 together with HEMK2/N6AMT1." evidence="7">
    <original>L</original>
    <variation>D</variation>
    <location>
        <position position="9"/>
    </location>
</feature>
<feature type="mutagenesis site" description="Abolishes interaction with THUMPD2. Increases expression of exogenous TRMT112. No effect on interaction with N6AMT1, BUD23, METTL5, TRMT11, ALKBH8 and THUMPD3." evidence="12">
    <original>S</original>
    <variation>F</variation>
    <location>
        <position position="10"/>
    </location>
</feature>
<feature type="mutagenesis site" description="Abolishes interaction with METTL5 and THUMPD3. Reduces interaction with ALKBH8 and THUMPD2. No effect on interaction with N6AMT1, BUD23 and TRMT11. Reduces expression of exogenous TRMT112." evidence="12">
    <original>M</original>
    <variation>A</variation>
    <location>
        <position position="45"/>
    </location>
</feature>
<feature type="mutagenesis site" description="Abolishes interaction with THUMPD2 and THUMPD3. Reduces interaction with TRMT11, ALKBH8 and N6AMT1. No effect on interaction with BUD23 and METTL5. No effect on expression of exogenous TRMT112." evidence="12">
    <original>K</original>
    <variation>A</variation>
    <location>
        <position position="48"/>
    </location>
</feature>
<feature type="mutagenesis site" description="Increases interaction with METTL5. No effect on interaction with TRMT11, THUMPD2, THUMPD3, N6AMT1, BUD23 and ALKBH8. No effect on expression of exogenous TRMT112." evidence="12">
    <original>E</original>
    <variation>A</variation>
    <location>
        <position position="50"/>
    </location>
</feature>
<feature type="mutagenesis site" description="Reduces interaction with THUMPD2, THUMPD3, ALKBH8, TRMT11, N6AMT1 and BUD23. Increases interaction with METTL5. Reduces expression of exogenous TRMT112." evidence="12">
    <original>E</original>
    <variation>A</variation>
    <location>
        <position position="92"/>
    </location>
</feature>
<feature type="mutagenesis site" description="Abolishes interaction with BUD23, THUMPD2 and THUMPD3. Reduces interaction with TRMT11, N6AMT1, METTL5 and ALKBH8. Reduces expression of exogenous TRMT112." evidence="12">
    <original>F</original>
    <variation>A</variation>
    <location>
        <position position="107"/>
    </location>
</feature>
<feature type="mutagenesis site" description="Strongly reduced ability to promote N5-methylation of ETF1 together with HEMK2/N6AMT1." evidence="7">
    <original>I</original>
    <variation>D</variation>
    <location>
        <position position="113"/>
    </location>
</feature>
<feature type="mutagenesis site" description="Abolishes interaction with THUMPD2 and THUMPD3. Reduces interaction with N6AMT1, BUD23, TRMT11 and ALKBH8. Reduces expression of exogenous TRMT112. Increases interaction with METTL5." evidence="12">
    <original>I</original>
    <variation>F</variation>
    <location>
        <position position="113"/>
    </location>
</feature>
<feature type="sequence conflict" description="In Ref. 6; AAH29482." evidence="16" ref="6">
    <original>E</original>
    <variation>G</variation>
    <location>
        <position position="120"/>
    </location>
</feature>
<feature type="helix" evidence="30">
    <location>
        <begin position="3"/>
        <end position="6"/>
    </location>
</feature>
<feature type="turn" evidence="30">
    <location>
        <begin position="14"/>
        <end position="16"/>
    </location>
</feature>
<feature type="helix" evidence="30">
    <location>
        <begin position="17"/>
        <end position="20"/>
    </location>
</feature>
<feature type="strand" evidence="30">
    <location>
        <begin position="24"/>
        <end position="32"/>
    </location>
</feature>
<feature type="helix" evidence="30">
    <location>
        <begin position="39"/>
        <end position="45"/>
    </location>
</feature>
<feature type="helix" evidence="30">
    <location>
        <begin position="46"/>
        <end position="48"/>
    </location>
</feature>
<feature type="helix" evidence="30">
    <location>
        <begin position="51"/>
        <end position="60"/>
    </location>
</feature>
<feature type="helix" evidence="30">
    <location>
        <begin position="74"/>
        <end position="76"/>
    </location>
</feature>
<feature type="helix" evidence="30">
    <location>
        <begin position="78"/>
        <end position="89"/>
    </location>
</feature>
<feature type="strand" evidence="30">
    <location>
        <begin position="91"/>
        <end position="99"/>
    </location>
</feature>
<feature type="turn" evidence="30">
    <location>
        <begin position="101"/>
        <end position="103"/>
    </location>
</feature>
<feature type="strand" evidence="30">
    <location>
        <begin position="106"/>
        <end position="110"/>
    </location>
</feature>
<feature type="strand" evidence="30">
    <location>
        <begin position="113"/>
        <end position="115"/>
    </location>
</feature>
<feature type="turn" evidence="29">
    <location>
        <begin position="120"/>
        <end position="122"/>
    </location>
</feature>
<keyword id="KW-0002">3D-structure</keyword>
<keyword id="KW-0025">Alternative splicing</keyword>
<keyword id="KW-0963">Cytoplasm</keyword>
<keyword id="KW-0539">Nucleus</keyword>
<keyword id="KW-0597">Phosphoprotein</keyword>
<keyword id="KW-1267">Proteomics identification</keyword>
<keyword id="KW-1185">Reference proteome</keyword>
<keyword id="KW-0698">rRNA processing</keyword>
<accession>Q9UI30</accession>
<accession>B2R539</accession>
<accession>J3KNG5</accession>
<accession>Q3MHC7</accession>
<accession>Q8N2Z4</accession>
<proteinExistence type="evidence at protein level"/>
<organism>
    <name type="scientific">Homo sapiens</name>
    <name type="common">Human</name>
    <dbReference type="NCBI Taxonomy" id="9606"/>
    <lineage>
        <taxon>Eukaryota</taxon>
        <taxon>Metazoa</taxon>
        <taxon>Chordata</taxon>
        <taxon>Craniata</taxon>
        <taxon>Vertebrata</taxon>
        <taxon>Euteleostomi</taxon>
        <taxon>Mammalia</taxon>
        <taxon>Eutheria</taxon>
        <taxon>Euarchontoglires</taxon>
        <taxon>Primates</taxon>
        <taxon>Haplorrhini</taxon>
        <taxon>Catarrhini</taxon>
        <taxon>Hominidae</taxon>
        <taxon>Homo</taxon>
    </lineage>
</organism>
<evidence type="ECO:0000269" key="1">
    <source>
    </source>
</evidence>
<evidence type="ECO:0000269" key="2">
    <source>
    </source>
</evidence>
<evidence type="ECO:0000269" key="3">
    <source>
    </source>
</evidence>
<evidence type="ECO:0000269" key="4">
    <source>
    </source>
</evidence>
<evidence type="ECO:0000269" key="5">
    <source>
    </source>
</evidence>
<evidence type="ECO:0000269" key="6">
    <source>
    </source>
</evidence>
<evidence type="ECO:0000269" key="7">
    <source>
    </source>
</evidence>
<evidence type="ECO:0000269" key="8">
    <source>
    </source>
</evidence>
<evidence type="ECO:0000269" key="9">
    <source>
    </source>
</evidence>
<evidence type="ECO:0000269" key="10">
    <source>
    </source>
</evidence>
<evidence type="ECO:0000269" key="11">
    <source>
    </source>
</evidence>
<evidence type="ECO:0000269" key="12">
    <source>
    </source>
</evidence>
<evidence type="ECO:0000269" key="13">
    <source>
    </source>
</evidence>
<evidence type="ECO:0000269" key="14">
    <source>
    </source>
</evidence>
<evidence type="ECO:0000303" key="15">
    <source>
    </source>
</evidence>
<evidence type="ECO:0000305" key="16"/>
<evidence type="ECO:0000312" key="17">
    <source>
        <dbReference type="HGNC" id="HGNC:26940"/>
    </source>
</evidence>
<evidence type="ECO:0007744" key="18">
    <source>
        <dbReference type="PDB" id="6H1D"/>
    </source>
</evidence>
<evidence type="ECO:0007744" key="19">
    <source>
        <dbReference type="PDB" id="6H1E"/>
    </source>
</evidence>
<evidence type="ECO:0007744" key="20">
    <source>
        <dbReference type="PDB" id="6H2U"/>
    </source>
</evidence>
<evidence type="ECO:0007744" key="21">
    <source>
        <dbReference type="PDB" id="6H2V"/>
    </source>
</evidence>
<evidence type="ECO:0007744" key="22">
    <source>
        <dbReference type="PDB" id="6K0X"/>
    </source>
</evidence>
<evidence type="ECO:0007744" key="23">
    <source>
        <dbReference type="PDB" id="6KHS"/>
    </source>
</evidence>
<evidence type="ECO:0007744" key="24">
    <source>
        <dbReference type="PDB" id="6KMR"/>
    </source>
</evidence>
<evidence type="ECO:0007744" key="25">
    <source>
        <dbReference type="PDB" id="6KMS"/>
    </source>
</evidence>
<evidence type="ECO:0007744" key="26">
    <source>
    </source>
</evidence>
<evidence type="ECO:0007744" key="27">
    <source>
    </source>
</evidence>
<evidence type="ECO:0007744" key="28">
    <source>
    </source>
</evidence>
<evidence type="ECO:0007829" key="29">
    <source>
        <dbReference type="PDB" id="6KHS"/>
    </source>
</evidence>
<evidence type="ECO:0007829" key="30">
    <source>
        <dbReference type="PDB" id="8CNC"/>
    </source>
</evidence>
<sequence>MKLLTHNLLSSHVRGVGSRGFPLRLQATEVRICPVEFNPNFVARMIPKVEWSAFLEAADNLRLIQVPKGPVEGYEENEEFLRTMHHLLLEVEVIEGTLQCPESGRMFPISRGIPNMLLSEEETES</sequence>
<name>TR112_HUMAN</name>
<comment type="function">
    <text evidence="1 2 3 4 5 7 10 11 14">Acts as an activator of both rRNA/tRNA and protein methyltransferases (PubMed:18539146, PubMed:20308323, PubMed:25851604, PubMed:31061526, PubMed:31328227, PubMed:31636962, PubMed:37283053). Together with methyltransferase BUD23, methylates the N(7) position of a guanine in 18S rRNA (PubMed:25851604). The heterodimer with N6AMT1/HEMK2 catalyzes N5-methylation of ETF1 on 'Gln-185', using S-adenosyl L-methionine as methyl donor (PubMed:18539146, PubMed:31061526, PubMed:31636962). The heterodimer with N6AMT1/HEMK2 also monomethylates 'Lys-12' of histone H4 (H4K12me1) (PubMed:31061526). The heterodimer with ALKBH8 catalyzes the methylation of 5-carboxymethyl uridine to 5-methylcarboxymethyl uridine at the wobble position of the anticodon loop in target tRNA species (PubMed:20308323). Together with methyltransferase THUMPD3, catalyzes the formation of N(2)-methylguanosine at position 6 in a broad range of tRNA substrates and at position 7 of tRNA(Trp) (PubMed:34669960, PubMed:37283053). Involved in the pre-rRNA processing steps leading to small-subunit rRNA production (PubMed:25851604). Together with methyltransferase METTL5, specifically methylates the 6th position of adenine in position 1832 of 18S rRNA (PubMed:31328227, PubMed:33428944, PubMed:35033535, PubMed:37283053).</text>
</comment>
<comment type="subunit">
    <text evidence="2 3 4 5 6 7 8 9 10 11 12 13 14">Part of the heterodimeric BUD23-TRM112 methyltransferase complex; this heterodimerization is necessary for the metabolic stability and activity of the catalytic subunit BUD23 (PubMed:25851604, PubMed:34948388). Part of the heterodimeric N6AMT1-TRM112 methyltransferase complex; this heterodimerization is necessary for S-adenosyl-L-methionine-binding to N6AMT1/HEMK2 (PubMed:20308323, PubMed:25851604, PubMed:31061526, PubMed:31632689, PubMed:31636962, PubMed:32969463, PubMed:34948388). Part of the heterodimeric ALKBH8-TRM112 methyltransferase complex (PubMed:20308323, PubMed:34948388). Part of the heterodimeric METTL5-TRM112 methyltransferase complex; this heterodimerization is necessary for the stability of the catalytic subunit METTL5 (PubMed:31328227, PubMed:32217665, PubMed:33428944, PubMed:34948388, PubMed:35033535, PubMed:37283053). Part of the heterodimeric THUMPD3-TRM112 methyltransferase complex; this complex forms an active tRNA methyltransferase, where TRMT112 acts as an activator of the catalytic subunit THUMPD3 (PubMed:34669960, PubMed:34948388, PubMed:37283053). Part of the heterodimeric THUMPD2-TRM112 methyltransferase complex; this complex forms an active tRNA methyltransferase, where TRMT112 acts as an activator of the catalytic subunit THUMPD2 (PubMed:34948388, PubMed:37283053). Part of the heterodimeric TRMT11-TRM112 methyltransferase complex; this complex forms an active tRNA methyltransferase, where TRMT112 acts as an activator of the catalytic subunit TRMT11 (PubMed:34948388, PubMed:37283053).</text>
</comment>
<comment type="interaction">
    <interactant intactId="EBI-373326">
        <id>Q9UI30</id>
    </interactant>
    <interactant intactId="EBI-10825637">
        <id>Q96BT7</id>
        <label>ALKBH8</label>
    </interactant>
    <organismsDiffer>false</organismsDiffer>
    <experiments>10</experiments>
</comment>
<comment type="interaction">
    <interactant intactId="EBI-373326">
        <id>Q9UI30</id>
    </interactant>
    <interactant intactId="EBI-1044726">
        <id>O43709</id>
        <label>BUD23</label>
    </interactant>
    <organismsDiffer>false</organismsDiffer>
    <experiments>12</experiments>
</comment>
<comment type="interaction">
    <interactant intactId="EBI-373326">
        <id>Q9UI30</id>
    </interactant>
    <interactant intactId="EBI-16439278">
        <id>Q6FHY5</id>
        <label>MEOX2</label>
    </interactant>
    <organismsDiffer>false</organismsDiffer>
    <experiments>3</experiments>
</comment>
<comment type="interaction">
    <interactant intactId="EBI-373326">
        <id>Q9UI30</id>
    </interactant>
    <interactant intactId="EBI-12360031">
        <id>Q9NRN9</id>
        <label>METTL5</label>
    </interactant>
    <organismsDiffer>false</organismsDiffer>
    <experiments>8</experiments>
</comment>
<comment type="interaction">
    <interactant intactId="EBI-373326">
        <id>Q9UI30</id>
    </interactant>
    <interactant intactId="EBI-7966667">
        <id>Q9Y5N5</id>
        <label>N6AMT1</label>
    </interactant>
    <organismsDiffer>false</organismsDiffer>
    <experiments>7</experiments>
</comment>
<comment type="interaction">
    <interactant intactId="EBI-373326">
        <id>Q9UI30</id>
    </interactant>
    <interactant intactId="EBI-15105991">
        <id>Q9BTF0</id>
        <label>THUMPD2</label>
    </interactant>
    <organismsDiffer>false</organismsDiffer>
    <experiments>5</experiments>
</comment>
<comment type="interaction">
    <interactant intactId="EBI-373326">
        <id>Q9UI30</id>
    </interactant>
    <interactant intactId="EBI-373253">
        <id>Q9BV44</id>
        <label>THUMPD3</label>
    </interactant>
    <organismsDiffer>false</organismsDiffer>
    <experiments>10</experiments>
</comment>
<comment type="interaction">
    <interactant intactId="EBI-373326">
        <id>Q9UI30</id>
    </interactant>
    <interactant intactId="EBI-2515608">
        <id>Q7Z4G4</id>
        <label>TRMT11</label>
    </interactant>
    <organismsDiffer>false</organismsDiffer>
    <experiments>6</experiments>
</comment>
<comment type="subcellular location">
    <subcellularLocation>
        <location evidence="3">Nucleus</location>
        <location evidence="3">Nucleoplasm</location>
    </subcellularLocation>
    <subcellularLocation>
        <location evidence="3">Cytoplasm</location>
        <location evidence="3">Perinuclear region</location>
    </subcellularLocation>
    <text evidence="3">Localizes to a polarized perinuclear structure, overlapping partially with the Golgi and lysosomes (PubMed:25851604).</text>
</comment>
<comment type="alternative products">
    <event type="alternative splicing"/>
    <isoform>
        <id>Q9UI30-1</id>
        <name>1</name>
        <sequence type="displayed"/>
    </isoform>
    <isoform>
        <id>Q9UI30-2</id>
        <name>2</name>
        <sequence type="described" ref="VSP_054748"/>
    </isoform>
</comment>
<comment type="similarity">
    <text evidence="16">Belongs to the TRM112 family.</text>
</comment>
<protein>
    <recommendedName>
        <fullName>Multifunctional methyltransferase subunit TRM112-like protein</fullName>
    </recommendedName>
    <alternativeName>
        <fullName>tRNA methyltransferase 112 homolog</fullName>
    </alternativeName>
</protein>
<dbReference type="EMBL" id="AF110774">
    <property type="protein sequence ID" value="AAF14857.1"/>
    <property type="molecule type" value="mRNA"/>
</dbReference>
<dbReference type="EMBL" id="AF229068">
    <property type="protein sequence ID" value="AAF82266.1"/>
    <property type="molecule type" value="mRNA"/>
</dbReference>
<dbReference type="EMBL" id="AF161501">
    <property type="protein sequence ID" value="AAF29116.1"/>
    <property type="molecule type" value="mRNA"/>
</dbReference>
<dbReference type="EMBL" id="AK312050">
    <property type="protein sequence ID" value="BAG34986.1"/>
    <property type="molecule type" value="mRNA"/>
</dbReference>
<dbReference type="EMBL" id="AP001453">
    <property type="status" value="NOT_ANNOTATED_CDS"/>
    <property type="molecule type" value="Genomic_DNA"/>
</dbReference>
<dbReference type="EMBL" id="CH471076">
    <property type="protein sequence ID" value="EAW74251.1"/>
    <property type="molecule type" value="Genomic_DNA"/>
</dbReference>
<dbReference type="EMBL" id="BC017172">
    <property type="protein sequence ID" value="AAH17172.1"/>
    <property type="molecule type" value="mRNA"/>
</dbReference>
<dbReference type="EMBL" id="BC029482">
    <property type="protein sequence ID" value="AAH29482.1"/>
    <property type="molecule type" value="mRNA"/>
</dbReference>
<dbReference type="EMBL" id="BC105294">
    <property type="protein sequence ID" value="AAI05295.1"/>
    <property type="molecule type" value="mRNA"/>
</dbReference>
<dbReference type="CCDS" id="CCDS66113.1">
    <molecule id="Q9UI30-2"/>
</dbReference>
<dbReference type="CCDS" id="CCDS8068.1">
    <molecule id="Q9UI30-1"/>
</dbReference>
<dbReference type="RefSeq" id="NP_001273011.1">
    <molecule id="Q9UI30-2"/>
    <property type="nucleotide sequence ID" value="NM_001286082.2"/>
</dbReference>
<dbReference type="RefSeq" id="NP_001359000.1">
    <molecule id="Q9UI30-1"/>
    <property type="nucleotide sequence ID" value="NM_001372071.1"/>
</dbReference>
<dbReference type="RefSeq" id="NP_001359001.1">
    <molecule id="Q9UI30-1"/>
    <property type="nucleotide sequence ID" value="NM_001372072.1"/>
</dbReference>
<dbReference type="RefSeq" id="NP_057488.1">
    <molecule id="Q9UI30-1"/>
    <property type="nucleotide sequence ID" value="NM_016404.3"/>
</dbReference>
<dbReference type="RefSeq" id="XP_047283074.1">
    <molecule id="Q9UI30-1"/>
    <property type="nucleotide sequence ID" value="XM_047427118.1"/>
</dbReference>
<dbReference type="RefSeq" id="XP_047283075.1">
    <molecule id="Q9UI30-1"/>
    <property type="nucleotide sequence ID" value="XM_047427119.1"/>
</dbReference>
<dbReference type="RefSeq" id="XP_054225088.1">
    <molecule id="Q9UI30-1"/>
    <property type="nucleotide sequence ID" value="XM_054369113.1"/>
</dbReference>
<dbReference type="RefSeq" id="XP_054225089.1">
    <molecule id="Q9UI30-1"/>
    <property type="nucleotide sequence ID" value="XM_054369114.1"/>
</dbReference>
<dbReference type="PDB" id="6G4W">
    <property type="method" value="EM"/>
    <property type="resolution" value="4.50 A"/>
    <property type="chains" value="r=1-125"/>
</dbReference>
<dbReference type="PDB" id="6H1D">
    <property type="method" value="X-ray"/>
    <property type="resolution" value="1.94 A"/>
    <property type="chains" value="B=2-125"/>
</dbReference>
<dbReference type="PDB" id="6H1E">
    <property type="method" value="X-ray"/>
    <property type="resolution" value="1.90 A"/>
    <property type="chains" value="B=2-125"/>
</dbReference>
<dbReference type="PDB" id="6H2U">
    <property type="method" value="X-ray"/>
    <property type="resolution" value="1.60 A"/>
    <property type="chains" value="B=1-118"/>
</dbReference>
<dbReference type="PDB" id="6H2V">
    <property type="method" value="X-ray"/>
    <property type="resolution" value="2.49 A"/>
    <property type="chains" value="B/D=1-125"/>
</dbReference>
<dbReference type="PDB" id="6K0X">
    <property type="method" value="X-ray"/>
    <property type="resolution" value="2.20 A"/>
    <property type="chains" value="B=1-125"/>
</dbReference>
<dbReference type="PDB" id="6KHS">
    <property type="method" value="X-ray"/>
    <property type="resolution" value="1.90 A"/>
    <property type="chains" value="B=1-125"/>
</dbReference>
<dbReference type="PDB" id="6KMR">
    <property type="method" value="X-ray"/>
    <property type="resolution" value="2.00 A"/>
    <property type="chains" value="A=1-125"/>
</dbReference>
<dbReference type="PDB" id="6KMS">
    <property type="method" value="X-ray"/>
    <property type="resolution" value="3.20 A"/>
    <property type="chains" value="A/B=1-125"/>
</dbReference>
<dbReference type="PDB" id="6PED">
    <property type="method" value="X-ray"/>
    <property type="resolution" value="2.30 A"/>
    <property type="chains" value="B=1-125"/>
</dbReference>
<dbReference type="PDB" id="7WTS">
    <property type="method" value="EM"/>
    <property type="resolution" value="3.20 A"/>
    <property type="chains" value="r=1-125"/>
</dbReference>
<dbReference type="PDB" id="7WTT">
    <property type="method" value="EM"/>
    <property type="resolution" value="3.10 A"/>
    <property type="chains" value="r=1-125"/>
</dbReference>
<dbReference type="PDB" id="7WTU">
    <property type="method" value="EM"/>
    <property type="resolution" value="3.00 A"/>
    <property type="chains" value="r=1-125"/>
</dbReference>
<dbReference type="PDB" id="7WTV">
    <property type="method" value="EM"/>
    <property type="resolution" value="3.50 A"/>
    <property type="chains" value="r=1-125"/>
</dbReference>
<dbReference type="PDB" id="7WTW">
    <property type="method" value="EM"/>
    <property type="resolution" value="3.20 A"/>
    <property type="chains" value="r=1-125"/>
</dbReference>
<dbReference type="PDB" id="8CNC">
    <property type="method" value="X-ray"/>
    <property type="resolution" value="1.46 A"/>
    <property type="chains" value="B=2-125"/>
</dbReference>
<dbReference type="PDB" id="8QDG">
    <property type="method" value="X-ray"/>
    <property type="resolution" value="1.39 A"/>
    <property type="chains" value="B=2-125"/>
</dbReference>
<dbReference type="PDB" id="8QDI">
    <property type="method" value="X-ray"/>
    <property type="resolution" value="1.47 A"/>
    <property type="chains" value="B=2-125"/>
</dbReference>
<dbReference type="PDBsum" id="6G4W"/>
<dbReference type="PDBsum" id="6H1D"/>
<dbReference type="PDBsum" id="6H1E"/>
<dbReference type="PDBsum" id="6H2U"/>
<dbReference type="PDBsum" id="6H2V"/>
<dbReference type="PDBsum" id="6K0X"/>
<dbReference type="PDBsum" id="6KHS"/>
<dbReference type="PDBsum" id="6KMR"/>
<dbReference type="PDBsum" id="6KMS"/>
<dbReference type="PDBsum" id="6PED"/>
<dbReference type="PDBsum" id="7WTS"/>
<dbReference type="PDBsum" id="7WTT"/>
<dbReference type="PDBsum" id="7WTU"/>
<dbReference type="PDBsum" id="7WTV"/>
<dbReference type="PDBsum" id="7WTW"/>
<dbReference type="PDBsum" id="8CNC"/>
<dbReference type="PDBsum" id="8QDG"/>
<dbReference type="PDBsum" id="8QDI"/>
<dbReference type="EMDB" id="EMD-32799"/>
<dbReference type="EMDB" id="EMD-32800"/>
<dbReference type="EMDB" id="EMD-32801"/>
<dbReference type="EMDB" id="EMD-32802"/>
<dbReference type="EMDB" id="EMD-32803"/>
<dbReference type="EMDB" id="EMD-4349"/>
<dbReference type="SMR" id="Q9UI30"/>
<dbReference type="BioGRID" id="119576">
    <property type="interactions" value="100"/>
</dbReference>
<dbReference type="ComplexPortal" id="CPX-2486">
    <property type="entry name" value="THUMPD3-TRM112 methyltransferase complex"/>
</dbReference>
<dbReference type="ComplexPortal" id="CPX-2848">
    <property type="entry name" value="TRMT11-TRM112 methyltransferase complex"/>
</dbReference>
<dbReference type="ComplexPortal" id="CPX-2850">
    <property type="entry name" value="METTL5-TRM112 methyltransferase complex"/>
</dbReference>
<dbReference type="ComplexPortal" id="CPX-2852">
    <property type="entry name" value="THUMPD2-TRM112 methyltransferase complex"/>
</dbReference>
<dbReference type="ComplexPortal" id="CPX-2861">
    <property type="entry name" value="ALKBH8-TRM112 methyltransferase complex"/>
</dbReference>
<dbReference type="ComplexPortal" id="CPX-2866">
    <property type="entry name" value="N6AMT1-TRM112 methyltransferase complex"/>
</dbReference>
<dbReference type="ComplexPortal" id="CPX-2871">
    <property type="entry name" value="BUD23-TRM112 methyltransferase complex"/>
</dbReference>
<dbReference type="FunCoup" id="Q9UI30">
    <property type="interactions" value="1872"/>
</dbReference>
<dbReference type="IntAct" id="Q9UI30">
    <property type="interactions" value="36"/>
</dbReference>
<dbReference type="MINT" id="Q9UI30"/>
<dbReference type="STRING" id="9606.ENSP00000438349"/>
<dbReference type="ChEMBL" id="CHEMBL4295977"/>
<dbReference type="GlyGen" id="Q9UI30">
    <property type="glycosylation" value="1 site, 1 O-linked glycan (1 site)"/>
</dbReference>
<dbReference type="iPTMnet" id="Q9UI30"/>
<dbReference type="PhosphoSitePlus" id="Q9UI30"/>
<dbReference type="SwissPalm" id="Q9UI30"/>
<dbReference type="BioMuta" id="TRMT112"/>
<dbReference type="DMDM" id="47606219"/>
<dbReference type="jPOST" id="Q9UI30"/>
<dbReference type="MassIVE" id="Q9UI30"/>
<dbReference type="PaxDb" id="9606-ENSP00000438349"/>
<dbReference type="PeptideAtlas" id="Q9UI30"/>
<dbReference type="ProteomicsDB" id="84459">
    <molecule id="Q9UI30-1"/>
</dbReference>
<dbReference type="Pumba" id="Q9UI30"/>
<dbReference type="TopDownProteomics" id="Q9UI30-1">
    <molecule id="Q9UI30-1"/>
</dbReference>
<dbReference type="Antibodypedia" id="29268">
    <property type="antibodies" value="89 antibodies from 18 providers"/>
</dbReference>
<dbReference type="DNASU" id="51504"/>
<dbReference type="Ensembl" id="ENST00000308774.6">
    <molecule id="Q9UI30-2"/>
    <property type="protein sequence ID" value="ENSP00000309433.2"/>
    <property type="gene ID" value="ENSG00000173113.8"/>
</dbReference>
<dbReference type="Ensembl" id="ENST00000544844.6">
    <molecule id="Q9UI30-1"/>
    <property type="protein sequence ID" value="ENSP00000438349.2"/>
    <property type="gene ID" value="ENSG00000173113.8"/>
</dbReference>
<dbReference type="Ensembl" id="ENST00000715728.1">
    <molecule id="Q9UI30-1"/>
    <property type="protein sequence ID" value="ENSP00000520509.1"/>
    <property type="gene ID" value="ENSG00000173113.8"/>
</dbReference>
<dbReference type="GeneID" id="51504"/>
<dbReference type="KEGG" id="hsa:51504"/>
<dbReference type="MANE-Select" id="ENST00000544844.6">
    <property type="protein sequence ID" value="ENSP00000438349.2"/>
    <property type="RefSeq nucleotide sequence ID" value="NM_016404.3"/>
    <property type="RefSeq protein sequence ID" value="NP_057488.1"/>
</dbReference>
<dbReference type="UCSC" id="uc001nzt.5">
    <molecule id="Q9UI30-1"/>
    <property type="organism name" value="human"/>
</dbReference>
<dbReference type="AGR" id="HGNC:26940"/>
<dbReference type="CTD" id="51504"/>
<dbReference type="DisGeNET" id="51504"/>
<dbReference type="GeneCards" id="TRMT112"/>
<dbReference type="HGNC" id="HGNC:26940">
    <property type="gene designation" value="TRMT112"/>
</dbReference>
<dbReference type="HPA" id="ENSG00000173113">
    <property type="expression patterns" value="Low tissue specificity"/>
</dbReference>
<dbReference type="MIM" id="618630">
    <property type="type" value="gene"/>
</dbReference>
<dbReference type="neXtProt" id="NX_Q9UI30"/>
<dbReference type="OpenTargets" id="ENSG00000173113"/>
<dbReference type="PharmGKB" id="PA165543757"/>
<dbReference type="VEuPathDB" id="HostDB:ENSG00000173113"/>
<dbReference type="eggNOG" id="KOG1088">
    <property type="taxonomic scope" value="Eukaryota"/>
</dbReference>
<dbReference type="GeneTree" id="ENSGT00390000009268"/>
<dbReference type="HOGENOM" id="CLU_086140_2_0_1"/>
<dbReference type="InParanoid" id="Q9UI30"/>
<dbReference type="OMA" id="NMLTSKC"/>
<dbReference type="OrthoDB" id="2187549at2759"/>
<dbReference type="PAN-GO" id="Q9UI30">
    <property type="GO annotations" value="3 GO annotations based on evolutionary models"/>
</dbReference>
<dbReference type="PhylomeDB" id="Q9UI30"/>
<dbReference type="TreeFam" id="TF313256"/>
<dbReference type="BioCyc" id="MetaCyc:ENSG00000173113-MONOMER"/>
<dbReference type="PathwayCommons" id="Q9UI30"/>
<dbReference type="Reactome" id="R-HSA-156581">
    <property type="pathway name" value="Methylation"/>
</dbReference>
<dbReference type="Reactome" id="R-HSA-6782315">
    <property type="pathway name" value="tRNA modification in the nucleus and cytosol"/>
</dbReference>
<dbReference type="Reactome" id="R-HSA-6790901">
    <property type="pathway name" value="rRNA modification in the nucleus and cytosol"/>
</dbReference>
<dbReference type="Reactome" id="R-HSA-72764">
    <property type="pathway name" value="Eukaryotic Translation Termination"/>
</dbReference>
<dbReference type="SignaLink" id="Q9UI30"/>
<dbReference type="BioGRID-ORCS" id="51504">
    <property type="hits" value="840 hits in 1132 CRISPR screens"/>
</dbReference>
<dbReference type="CD-CODE" id="91857CE7">
    <property type="entry name" value="Nucleolus"/>
</dbReference>
<dbReference type="ChiTaRS" id="TRMT112">
    <property type="organism name" value="human"/>
</dbReference>
<dbReference type="GenomeRNAi" id="51504"/>
<dbReference type="Pharos" id="Q9UI30">
    <property type="development level" value="Tbio"/>
</dbReference>
<dbReference type="PRO" id="PR:Q9UI30"/>
<dbReference type="Proteomes" id="UP000005640">
    <property type="component" value="Chromosome 11"/>
</dbReference>
<dbReference type="RNAct" id="Q9UI30">
    <property type="molecule type" value="protein"/>
</dbReference>
<dbReference type="Bgee" id="ENSG00000173113">
    <property type="expression patterns" value="Expressed in oocyte and 205 other cell types or tissues"/>
</dbReference>
<dbReference type="ExpressionAtlas" id="Q9UI30">
    <property type="expression patterns" value="baseline and differential"/>
</dbReference>
<dbReference type="GO" id="GO:0005737">
    <property type="term" value="C:cytoplasm"/>
    <property type="evidence" value="ECO:0000318"/>
    <property type="project" value="GO_Central"/>
</dbReference>
<dbReference type="GO" id="GO:0005829">
    <property type="term" value="C:cytosol"/>
    <property type="evidence" value="ECO:0000304"/>
    <property type="project" value="Reactome"/>
</dbReference>
<dbReference type="GO" id="GO:0005654">
    <property type="term" value="C:nucleoplasm"/>
    <property type="evidence" value="ECO:0000314"/>
    <property type="project" value="UniProtKB"/>
</dbReference>
<dbReference type="GO" id="GO:0005634">
    <property type="term" value="C:nucleus"/>
    <property type="evidence" value="ECO:0000318"/>
    <property type="project" value="GO_Central"/>
</dbReference>
<dbReference type="GO" id="GO:0048471">
    <property type="term" value="C:perinuclear region of cytoplasm"/>
    <property type="evidence" value="ECO:0000314"/>
    <property type="project" value="UniProtKB"/>
</dbReference>
<dbReference type="GO" id="GO:0032991">
    <property type="term" value="C:protein-containing complex"/>
    <property type="evidence" value="ECO:0000314"/>
    <property type="project" value="MGI"/>
</dbReference>
<dbReference type="GO" id="GO:0043528">
    <property type="term" value="C:tRNA (m2G10) methyltransferase complex"/>
    <property type="evidence" value="ECO:0000318"/>
    <property type="project" value="GO_Central"/>
</dbReference>
<dbReference type="GO" id="GO:0046982">
    <property type="term" value="F:protein heterodimerization activity"/>
    <property type="evidence" value="ECO:0000314"/>
    <property type="project" value="UniProtKB"/>
</dbReference>
<dbReference type="GO" id="GO:0008276">
    <property type="term" value="F:protein methyltransferase activity"/>
    <property type="evidence" value="ECO:0000314"/>
    <property type="project" value="MGI"/>
</dbReference>
<dbReference type="GO" id="GO:0141106">
    <property type="term" value="F:tRNA methyltransferase activator activity"/>
    <property type="evidence" value="ECO:0000314"/>
    <property type="project" value="UniProtKB"/>
</dbReference>
<dbReference type="GO" id="GO:0000470">
    <property type="term" value="P:maturation of LSU-rRNA"/>
    <property type="evidence" value="ECO:0000318"/>
    <property type="project" value="GO_Central"/>
</dbReference>
<dbReference type="GO" id="GO:0030490">
    <property type="term" value="P:maturation of SSU-rRNA"/>
    <property type="evidence" value="ECO:0000318"/>
    <property type="project" value="GO_Central"/>
</dbReference>
<dbReference type="GO" id="GO:0018364">
    <property type="term" value="P:peptidyl-glutamine methylation"/>
    <property type="evidence" value="ECO:0000314"/>
    <property type="project" value="UniProtKB"/>
</dbReference>
<dbReference type="GO" id="GO:2000234">
    <property type="term" value="P:positive regulation of rRNA processing"/>
    <property type="evidence" value="ECO:0000315"/>
    <property type="project" value="UniProtKB"/>
</dbReference>
<dbReference type="GO" id="GO:0070476">
    <property type="term" value="P:rRNA (guanine-N7)-methylation"/>
    <property type="evidence" value="ECO:0000315"/>
    <property type="project" value="UniProtKB"/>
</dbReference>
<dbReference type="GO" id="GO:0031167">
    <property type="term" value="P:rRNA methylation"/>
    <property type="evidence" value="ECO:0000314"/>
    <property type="project" value="UniProtKB"/>
</dbReference>
<dbReference type="GO" id="GO:0045815">
    <property type="term" value="P:transcription initiation-coupled chromatin remodeling"/>
    <property type="evidence" value="ECO:0000314"/>
    <property type="project" value="UniProtKB"/>
</dbReference>
<dbReference type="GO" id="GO:0030488">
    <property type="term" value="P:tRNA methylation"/>
    <property type="evidence" value="ECO:0000315"/>
    <property type="project" value="UniProtKB"/>
</dbReference>
<dbReference type="CDD" id="cd21089">
    <property type="entry name" value="Trm112-like"/>
    <property type="match status" value="1"/>
</dbReference>
<dbReference type="FunFam" id="2.20.25.10:FF:000015">
    <property type="entry name" value="Multifunctional methyltransferase subunit TRM112-like protein"/>
    <property type="match status" value="1"/>
</dbReference>
<dbReference type="Gene3D" id="2.20.25.10">
    <property type="match status" value="1"/>
</dbReference>
<dbReference type="InterPro" id="IPR039127">
    <property type="entry name" value="Trm112"/>
</dbReference>
<dbReference type="InterPro" id="IPR005651">
    <property type="entry name" value="Trm112-like"/>
</dbReference>
<dbReference type="PANTHER" id="PTHR12773:SF0">
    <property type="entry name" value="MULTIFUNCTIONAL METHYLTRANSFERASE SUBUNIT TRM112-LIKE PROTEIN"/>
    <property type="match status" value="1"/>
</dbReference>
<dbReference type="PANTHER" id="PTHR12773">
    <property type="entry name" value="UPF0315 PROTEIN-RELATED"/>
    <property type="match status" value="1"/>
</dbReference>
<dbReference type="Pfam" id="PF03966">
    <property type="entry name" value="Trm112p"/>
    <property type="match status" value="1"/>
</dbReference>
<dbReference type="SUPFAM" id="SSF158997">
    <property type="entry name" value="Trm112p-like"/>
    <property type="match status" value="1"/>
</dbReference>
<gene>
    <name evidence="15 17" type="primary">TRMT112</name>
    <name type="ORF">AD-001</name>
    <name type="ORF">HSPC152</name>
    <name type="ORF">HSPC170</name>
</gene>